<evidence type="ECO:0000250" key="1"/>
<evidence type="ECO:0000250" key="2">
    <source>
        <dbReference type="UniProtKB" id="P00747"/>
    </source>
</evidence>
<evidence type="ECO:0000255" key="3">
    <source>
        <dbReference type="PROSITE-ProRule" id="PRU00121"/>
    </source>
</evidence>
<evidence type="ECO:0000255" key="4">
    <source>
        <dbReference type="PROSITE-ProRule" id="PRU00274"/>
    </source>
</evidence>
<evidence type="ECO:0000305" key="5"/>
<accession>P80009</accession>
<keyword id="KW-0094">Blood coagulation</keyword>
<keyword id="KW-0903">Direct protein sequencing</keyword>
<keyword id="KW-1015">Disulfide bond</keyword>
<keyword id="KW-0280">Fibrinolysis</keyword>
<keyword id="KW-0356">Hemostasis</keyword>
<keyword id="KW-0378">Hydrolase</keyword>
<keyword id="KW-0420">Kringle</keyword>
<keyword id="KW-0597">Phosphoprotein</keyword>
<keyword id="KW-0645">Protease</keyword>
<keyword id="KW-1185">Reference proteome</keyword>
<keyword id="KW-0964">Secreted</keyword>
<keyword id="KW-0720">Serine protease</keyword>
<keyword id="KW-0797">Tissue remodeling</keyword>
<keyword id="KW-0865">Zymogen</keyword>
<proteinExistence type="evidence at protein level"/>
<protein>
    <recommendedName>
        <fullName>Plasminogen</fullName>
        <ecNumber>3.4.21.7</ecNumber>
    </recommendedName>
    <component>
        <recommendedName>
            <fullName>Plasmin heavy chain A</fullName>
        </recommendedName>
    </component>
    <component>
        <recommendedName>
            <fullName>Plasmin light chain B</fullName>
        </recommendedName>
    </component>
</protein>
<sequence>ASDCMFGNGKGYRGKKATTVMGIPCQEWAAQEPHRHSIFTPETNPQAGLEKNYCRNPDGDVNGPWCYTMNQRKLFDYCDVPQCVSTSFDCGKPQVEPKKCPGRVVGGCVANPHSWPWQISLRTRYGKHFCGGTLISPEWVLTAAHCLERSSRPASYKVILGAHKEVNLESDVQEIEVYKLFLEPTRADIALLKLSSPAVITSKVIPACLPPPNYVVADRTLCYITGWGETQGTYGAGLLKEAQLPVIENKVCNRYEYLNGRVKSTELCAGNLAGGTDSCQGDSGGPLVCFEKDKYILQGVTSWGLGCARPNKPGVYVRVSRFVTWIEGIMRNN</sequence>
<gene>
    <name type="primary">PLG</name>
</gene>
<dbReference type="EC" id="3.4.21.7"/>
<dbReference type="SMR" id="P80009"/>
<dbReference type="FunCoup" id="P80009">
    <property type="interactions" value="29"/>
</dbReference>
<dbReference type="STRING" id="9615.ENSCAFP00000001078"/>
<dbReference type="MEROPS" id="S01.233"/>
<dbReference type="PaxDb" id="9612-ENSCAFP00000001078"/>
<dbReference type="eggNOG" id="ENOG502QVNP">
    <property type="taxonomic scope" value="Eukaryota"/>
</dbReference>
<dbReference type="InParanoid" id="P80009"/>
<dbReference type="OrthoDB" id="41905at2759"/>
<dbReference type="Proteomes" id="UP000002254">
    <property type="component" value="Unplaced"/>
</dbReference>
<dbReference type="Proteomes" id="UP000694429">
    <property type="component" value="Unplaced"/>
</dbReference>
<dbReference type="Proteomes" id="UP000694542">
    <property type="component" value="Unplaced"/>
</dbReference>
<dbReference type="Proteomes" id="UP000805418">
    <property type="component" value="Unplaced"/>
</dbReference>
<dbReference type="GO" id="GO:0005615">
    <property type="term" value="C:extracellular space"/>
    <property type="evidence" value="ECO:0000318"/>
    <property type="project" value="GO_Central"/>
</dbReference>
<dbReference type="GO" id="GO:0004175">
    <property type="term" value="F:endopeptidase activity"/>
    <property type="evidence" value="ECO:0000318"/>
    <property type="project" value="GO_Central"/>
</dbReference>
<dbReference type="GO" id="GO:0004252">
    <property type="term" value="F:serine-type endopeptidase activity"/>
    <property type="evidence" value="ECO:0007669"/>
    <property type="project" value="UniProtKB-EC"/>
</dbReference>
<dbReference type="GO" id="GO:0005102">
    <property type="term" value="F:signaling receptor binding"/>
    <property type="evidence" value="ECO:0000318"/>
    <property type="project" value="GO_Central"/>
</dbReference>
<dbReference type="GO" id="GO:0007596">
    <property type="term" value="P:blood coagulation"/>
    <property type="evidence" value="ECO:0007669"/>
    <property type="project" value="UniProtKB-KW"/>
</dbReference>
<dbReference type="GO" id="GO:0042730">
    <property type="term" value="P:fibrinolysis"/>
    <property type="evidence" value="ECO:0007669"/>
    <property type="project" value="UniProtKB-KW"/>
</dbReference>
<dbReference type="GO" id="GO:0006508">
    <property type="term" value="P:proteolysis"/>
    <property type="evidence" value="ECO:0000318"/>
    <property type="project" value="GO_Central"/>
</dbReference>
<dbReference type="GO" id="GO:0048771">
    <property type="term" value="P:tissue remodeling"/>
    <property type="evidence" value="ECO:0007669"/>
    <property type="project" value="UniProtKB-KW"/>
</dbReference>
<dbReference type="CDD" id="cd00108">
    <property type="entry name" value="KR"/>
    <property type="match status" value="1"/>
</dbReference>
<dbReference type="CDD" id="cd00190">
    <property type="entry name" value="Tryp_SPc"/>
    <property type="match status" value="1"/>
</dbReference>
<dbReference type="FunFam" id="2.40.20.10:FF:000014">
    <property type="entry name" value="Plasminogen"/>
    <property type="match status" value="1"/>
</dbReference>
<dbReference type="FunFam" id="2.40.10.10:FF:000003">
    <property type="entry name" value="Transmembrane serine protease 3"/>
    <property type="match status" value="1"/>
</dbReference>
<dbReference type="Gene3D" id="2.40.20.10">
    <property type="entry name" value="Plasminogen Kringle 4"/>
    <property type="match status" value="1"/>
</dbReference>
<dbReference type="Gene3D" id="2.40.10.10">
    <property type="entry name" value="Trypsin-like serine proteases"/>
    <property type="match status" value="1"/>
</dbReference>
<dbReference type="InterPro" id="IPR000001">
    <property type="entry name" value="Kringle"/>
</dbReference>
<dbReference type="InterPro" id="IPR013806">
    <property type="entry name" value="Kringle-like"/>
</dbReference>
<dbReference type="InterPro" id="IPR018056">
    <property type="entry name" value="Kringle_CS"/>
</dbReference>
<dbReference type="InterPro" id="IPR038178">
    <property type="entry name" value="Kringle_sf"/>
</dbReference>
<dbReference type="InterPro" id="IPR009003">
    <property type="entry name" value="Peptidase_S1_PA"/>
</dbReference>
<dbReference type="InterPro" id="IPR043504">
    <property type="entry name" value="Peptidase_S1_PA_chymotrypsin"/>
</dbReference>
<dbReference type="InterPro" id="IPR001314">
    <property type="entry name" value="Peptidase_S1A"/>
</dbReference>
<dbReference type="InterPro" id="IPR050127">
    <property type="entry name" value="Serine_Proteases_S1"/>
</dbReference>
<dbReference type="InterPro" id="IPR001254">
    <property type="entry name" value="Trypsin_dom"/>
</dbReference>
<dbReference type="InterPro" id="IPR018114">
    <property type="entry name" value="TRYPSIN_HIS"/>
</dbReference>
<dbReference type="InterPro" id="IPR033116">
    <property type="entry name" value="TRYPSIN_SER"/>
</dbReference>
<dbReference type="PANTHER" id="PTHR24264:SF65">
    <property type="entry name" value="SRCR DOMAIN-CONTAINING PROTEIN"/>
    <property type="match status" value="1"/>
</dbReference>
<dbReference type="PANTHER" id="PTHR24264">
    <property type="entry name" value="TRYPSIN-RELATED"/>
    <property type="match status" value="1"/>
</dbReference>
<dbReference type="Pfam" id="PF00051">
    <property type="entry name" value="Kringle"/>
    <property type="match status" value="1"/>
</dbReference>
<dbReference type="Pfam" id="PF00089">
    <property type="entry name" value="Trypsin"/>
    <property type="match status" value="1"/>
</dbReference>
<dbReference type="PRINTS" id="PR00722">
    <property type="entry name" value="CHYMOTRYPSIN"/>
</dbReference>
<dbReference type="PRINTS" id="PR00018">
    <property type="entry name" value="KRINGLE"/>
</dbReference>
<dbReference type="SMART" id="SM00130">
    <property type="entry name" value="KR"/>
    <property type="match status" value="1"/>
</dbReference>
<dbReference type="SMART" id="SM00020">
    <property type="entry name" value="Tryp_SPc"/>
    <property type="match status" value="1"/>
</dbReference>
<dbReference type="SUPFAM" id="SSF57440">
    <property type="entry name" value="Kringle-like"/>
    <property type="match status" value="1"/>
</dbReference>
<dbReference type="SUPFAM" id="SSF50494">
    <property type="entry name" value="Trypsin-like serine proteases"/>
    <property type="match status" value="1"/>
</dbReference>
<dbReference type="PROSITE" id="PS00021">
    <property type="entry name" value="KRINGLE_1"/>
    <property type="match status" value="1"/>
</dbReference>
<dbReference type="PROSITE" id="PS50070">
    <property type="entry name" value="KRINGLE_2"/>
    <property type="match status" value="1"/>
</dbReference>
<dbReference type="PROSITE" id="PS50240">
    <property type="entry name" value="TRYPSIN_DOM"/>
    <property type="match status" value="1"/>
</dbReference>
<dbReference type="PROSITE" id="PS00134">
    <property type="entry name" value="TRYPSIN_HIS"/>
    <property type="match status" value="1"/>
</dbReference>
<dbReference type="PROSITE" id="PS00135">
    <property type="entry name" value="TRYPSIN_SER"/>
    <property type="match status" value="1"/>
</dbReference>
<comment type="function">
    <text evidence="1">Plasmin dissolves the fibrin of blood clots and acts as a proteolytic factor in a variety of other processes including embryonic development, tissue remodeling, tumor invasion, and inflammation. In ovulation, weakens the walls of the Graafian follicle. It activates the urokinase-type plasminogen activator, collagenases and several complement zymogens, such as C1, C4 and C5. Cleavage of fibronectin and laminin leads to cell detachment and apoptosis. Also cleaves fibrin, thrombospondin and von Willebrand factor. Its role in tissue remodeling and tumor invasion may be modulated by CSPG4. Binds to cells (By similarity).</text>
</comment>
<comment type="catalytic activity">
    <reaction>
        <text>Preferential cleavage: Lys-|-Xaa &gt; Arg-|-Xaa, higher selectivity than trypsin. Converts fibrin into soluble products.</text>
        <dbReference type="EC" id="3.4.21.7"/>
    </reaction>
</comment>
<comment type="activity regulation">
    <text>Converted into plasmin by plasminogen activators, both plasminogen and its activator being bound to fibrin. Activated with urokinase and high concentrations of streptokinase.</text>
</comment>
<comment type="subunit">
    <text evidence="2">Interacts with CSPG4 and AMOT. Interacts (via the Kringle domains) with HRG; the interaction tethers PLG to the cell surface and enhances its activation. Interacts (via Kringle 4 domain) with ADA; the interaction stimulates PLG activation when in complex with DPP4. Angiostatin: Interacts with ATP5F1A; the interaction inhibits most of the angiogenic effects of angiostatin.</text>
</comment>
<comment type="subcellular location">
    <subcellularLocation>
        <location evidence="1">Secreted</location>
    </subcellularLocation>
    <text evidence="1">Locates to the cell surface where it is proteolytically cleaved to produce the active plasmin. Interaction with HRG tethers it to the cell surface (By similarity).</text>
</comment>
<comment type="domain">
    <text evidence="1">Kringle domains mediate interaction with CSPG4.</text>
</comment>
<comment type="miscellaneous">
    <text>Plasmin is inactivated by alpha-2-antiplasmin immediately after dissociation from the clot.</text>
</comment>
<comment type="similarity">
    <text evidence="4">Belongs to the peptidase S1 family. Plasminogen subfamily.</text>
</comment>
<name>PLMN_CANLF</name>
<reference key="1">
    <citation type="journal article" date="1989" name="Protein Seq. Data Anal.">
        <title>Complete amino acid sequence of canine miniplasminogen.</title>
        <authorList>
            <person name="Schaller J."/>
            <person name="Straub C."/>
            <person name="Kaempfer U."/>
            <person name="Rickli E.E."/>
        </authorList>
    </citation>
    <scope>PROTEIN SEQUENCE</scope>
    <source>
        <tissue>Plasma</tissue>
    </source>
</reference>
<organism>
    <name type="scientific">Canis lupus familiaris</name>
    <name type="common">Dog</name>
    <name type="synonym">Canis familiaris</name>
    <dbReference type="NCBI Taxonomy" id="9615"/>
    <lineage>
        <taxon>Eukaryota</taxon>
        <taxon>Metazoa</taxon>
        <taxon>Chordata</taxon>
        <taxon>Craniata</taxon>
        <taxon>Vertebrata</taxon>
        <taxon>Euteleostomi</taxon>
        <taxon>Mammalia</taxon>
        <taxon>Eutheria</taxon>
        <taxon>Laurasiatheria</taxon>
        <taxon>Carnivora</taxon>
        <taxon>Caniformia</taxon>
        <taxon>Canidae</taxon>
        <taxon>Canis</taxon>
    </lineage>
</organism>
<feature type="chain" id="PRO_0000028044" description="Plasmin heavy chain A">
    <location>
        <begin position="1" status="less than"/>
        <end position="103"/>
    </location>
</feature>
<feature type="chain" id="PRO_0000028045" description="Plasmin light chain B">
    <location>
        <begin position="104"/>
        <end position="333"/>
    </location>
</feature>
<feature type="domain" description="Kringle 5" evidence="3">
    <location>
        <begin position="4"/>
        <end position="83"/>
    </location>
</feature>
<feature type="domain" description="Peptidase S1" evidence="4">
    <location>
        <begin position="104"/>
        <end position="331"/>
    </location>
</feature>
<feature type="active site" description="Charge relay system" evidence="1">
    <location>
        <position position="145"/>
    </location>
</feature>
<feature type="active site" description="Charge relay system" evidence="1">
    <location>
        <position position="188"/>
    </location>
</feature>
<feature type="active site" description="Charge relay system" evidence="1">
    <location>
        <position position="283"/>
    </location>
</feature>
<feature type="site" description="Interaction with streptokinase" evidence="5">
    <location>
        <position position="152"/>
    </location>
</feature>
<feature type="site" description="Interaction with streptokinase" evidence="5">
    <location>
        <position position="186"/>
    </location>
</feature>
<feature type="site" description="Interaction with streptokinase" evidence="5">
    <location>
        <position position="264"/>
    </location>
</feature>
<feature type="site" description="Site of substrate specificity" evidence="1">
    <location>
        <position position="277"/>
    </location>
</feature>
<feature type="modified residue" description="Phosphoserine" evidence="2">
    <location>
        <position position="120"/>
    </location>
</feature>
<feature type="disulfide bond" evidence="1">
    <location>
        <begin position="4"/>
        <end position="83"/>
    </location>
</feature>
<feature type="disulfide bond" evidence="1">
    <location>
        <begin position="25"/>
        <end position="66"/>
    </location>
</feature>
<feature type="disulfide bond" evidence="1">
    <location>
        <begin position="54"/>
        <end position="78"/>
    </location>
</feature>
<feature type="disulfide bond" description="Interchain (between A and B chains)" evidence="1">
    <location>
        <begin position="90"/>
        <end position="208"/>
    </location>
</feature>
<feature type="disulfide bond" description="Interchain (between A and B chains)" evidence="1">
    <location>
        <begin position="100"/>
        <end position="108"/>
    </location>
</feature>
<feature type="disulfide bond" evidence="1">
    <location>
        <begin position="130"/>
        <end position="146"/>
    </location>
</feature>
<feature type="disulfide bond" evidence="1">
    <location>
        <begin position="222"/>
        <end position="289"/>
    </location>
</feature>
<feature type="disulfide bond" evidence="1">
    <location>
        <begin position="252"/>
        <end position="268"/>
    </location>
</feature>
<feature type="disulfide bond" evidence="1">
    <location>
        <begin position="279"/>
        <end position="307"/>
    </location>
</feature>
<feature type="non-terminal residue">
    <location>
        <position position="1"/>
    </location>
</feature>